<organism>
    <name type="scientific">Escherichia coli (strain K12 / DH10B)</name>
    <dbReference type="NCBI Taxonomy" id="316385"/>
    <lineage>
        <taxon>Bacteria</taxon>
        <taxon>Pseudomonadati</taxon>
        <taxon>Pseudomonadota</taxon>
        <taxon>Gammaproteobacteria</taxon>
        <taxon>Enterobacterales</taxon>
        <taxon>Enterobacteriaceae</taxon>
        <taxon>Escherichia</taxon>
    </lineage>
</organism>
<comment type="function">
    <text evidence="1">Inhibits RpoS proteolysis by regulating RssB activity, thereby increasing the stability of the sigma stress factor RpoS especially during phosphate starvation, but also in stationary phase and during nitrogen starvation. Its effect on RpoS stability is due to its interaction with RssB, which probably blocks the interaction of RssB with RpoS, and the consequent delivery of the RssB-RpoS complex to the ClpXP protein degradation pathway.</text>
</comment>
<comment type="subunit">
    <text evidence="1">Interacts with RssB.</text>
</comment>
<comment type="subcellular location">
    <subcellularLocation>
        <location evidence="1">Cytoplasm</location>
    </subcellularLocation>
</comment>
<comment type="similarity">
    <text evidence="1">Belongs to the IraP family.</text>
</comment>
<reference key="1">
    <citation type="journal article" date="2008" name="J. Bacteriol.">
        <title>The complete genome sequence of Escherichia coli DH10B: insights into the biology of a laboratory workhorse.</title>
        <authorList>
            <person name="Durfee T."/>
            <person name="Nelson R."/>
            <person name="Baldwin S."/>
            <person name="Plunkett G. III"/>
            <person name="Burland V."/>
            <person name="Mau B."/>
            <person name="Petrosino J.F."/>
            <person name="Qin X."/>
            <person name="Muzny D.M."/>
            <person name="Ayele M."/>
            <person name="Gibbs R.A."/>
            <person name="Csorgo B."/>
            <person name="Posfai G."/>
            <person name="Weinstock G.M."/>
            <person name="Blattner F.R."/>
        </authorList>
    </citation>
    <scope>NUCLEOTIDE SEQUENCE [LARGE SCALE GENOMIC DNA]</scope>
    <source>
        <strain>K12 / DH10B</strain>
    </source>
</reference>
<feature type="chain" id="PRO_1000138485" description="Anti-adapter protein IraP">
    <location>
        <begin position="1"/>
        <end position="86"/>
    </location>
</feature>
<feature type="coiled-coil region" evidence="1">
    <location>
        <begin position="1"/>
        <end position="36"/>
    </location>
</feature>
<gene>
    <name evidence="1" type="primary">iraP</name>
    <name type="ordered locus">ECDH10B_0339</name>
</gene>
<accession>B1XEX1</accession>
<sequence>MKNLIAELLFKLAQKEEESKELCAQVEALEIIVTAMLRNMAQNDQQRLIDQVEGALYEVKPDASIPDDDTELLRDYVKKLLKHPRQ</sequence>
<dbReference type="EMBL" id="CP000948">
    <property type="protein sequence ID" value="ACB01511.1"/>
    <property type="molecule type" value="Genomic_DNA"/>
</dbReference>
<dbReference type="RefSeq" id="WP_000792970.1">
    <property type="nucleotide sequence ID" value="NC_010473.1"/>
</dbReference>
<dbReference type="SMR" id="B1XEX1"/>
<dbReference type="GeneID" id="93777080"/>
<dbReference type="KEGG" id="ecd:ECDH10B_0339"/>
<dbReference type="HOGENOM" id="CLU_169517_0_0_6"/>
<dbReference type="GO" id="GO:0005737">
    <property type="term" value="C:cytoplasm"/>
    <property type="evidence" value="ECO:0007669"/>
    <property type="project" value="UniProtKB-SubCell"/>
</dbReference>
<dbReference type="GO" id="GO:0009267">
    <property type="term" value="P:cellular response to starvation"/>
    <property type="evidence" value="ECO:0007669"/>
    <property type="project" value="UniProtKB-UniRule"/>
</dbReference>
<dbReference type="HAMAP" id="MF_01198">
    <property type="entry name" value="Anti_adapt_IraP"/>
    <property type="match status" value="1"/>
</dbReference>
<dbReference type="InterPro" id="IPR019732">
    <property type="entry name" value="SigmaS_Anti-adapt_IraP"/>
</dbReference>
<dbReference type="NCBIfam" id="NF007598">
    <property type="entry name" value="PRK10244.1"/>
    <property type="match status" value="1"/>
</dbReference>
<dbReference type="Pfam" id="PF10796">
    <property type="entry name" value="Anti-adapt_IraP"/>
    <property type="match status" value="1"/>
</dbReference>
<keyword id="KW-0175">Coiled coil</keyword>
<keyword id="KW-0963">Cytoplasm</keyword>
<keyword id="KW-0346">Stress response</keyword>
<proteinExistence type="inferred from homology"/>
<protein>
    <recommendedName>
        <fullName evidence="1">Anti-adapter protein IraP</fullName>
    </recommendedName>
</protein>
<evidence type="ECO:0000255" key="1">
    <source>
        <dbReference type="HAMAP-Rule" id="MF_01198"/>
    </source>
</evidence>
<name>IRAP_ECODH</name>